<proteinExistence type="inferred from homology"/>
<comment type="function">
    <text evidence="3">Folate transporter with broad substrate specificity (PubMed:21998306). Transports folic acid, folinic acid, pteroic acid, dihydropteroic acid, the folate precursor p-amino benzoic acid (pABA) and the human folate catabolite pABA monoglutamate (PubMed:21998306). Can transport 5-methyltetrahydrofolate with low efficiency (PubMed:21998306).</text>
</comment>
<comment type="catalytic activity">
    <reaction evidence="6">
        <text>folate(in) + H(+)(in) = folate(out) + H(+)(out)</text>
        <dbReference type="Rhea" id="RHEA:70159"/>
        <dbReference type="ChEBI" id="CHEBI:15378"/>
        <dbReference type="ChEBI" id="CHEBI:62501"/>
    </reaction>
</comment>
<comment type="catalytic activity">
    <reaction evidence="6">
        <text>(6S)-5-methyl-5,6,7,8-tetrahydrofolate(in) + H(+)(in) = (6S)-5-methyl-5,6,7,8-tetrahydrofolate(out) + H(+)(out)</text>
        <dbReference type="Rhea" id="RHEA:70167"/>
        <dbReference type="ChEBI" id="CHEBI:15378"/>
        <dbReference type="ChEBI" id="CHEBI:18608"/>
    </reaction>
</comment>
<comment type="activity regulation">
    <text evidence="3">Transport of folates is inhibited by probenecid and methotrexate.</text>
</comment>
<comment type="subcellular location">
    <subcellularLocation>
        <location evidence="3">Cell membrane</location>
        <topology evidence="1">Multi-pass membrane protein</topology>
    </subcellularLocation>
    <text evidence="3">In intraerythrocytic stage parasites, localizes to the plasma membrane and some intracellular vesicular structures.</text>
</comment>
<comment type="similarity">
    <text evidence="5">Belongs to the major facilitator superfamily. Folate-biopterin transporter (TC 2.A.71) family.</text>
</comment>
<protein>
    <recommendedName>
        <fullName evidence="4">Folate transporter 2</fullName>
        <shortName evidence="4">PfFT2</shortName>
    </recommendedName>
</protein>
<reference evidence="8" key="1">
    <citation type="journal article" date="2002" name="Nature">
        <title>Genome sequence of the human malaria parasite Plasmodium falciparum.</title>
        <authorList>
            <person name="Gardner M.J."/>
            <person name="Hall N."/>
            <person name="Fung E."/>
            <person name="White O."/>
            <person name="Berriman M."/>
            <person name="Hyman R.W."/>
            <person name="Carlton J.M."/>
            <person name="Pain A."/>
            <person name="Nelson K.E."/>
            <person name="Bowman S."/>
            <person name="Paulsen I.T."/>
            <person name="James K.D."/>
            <person name="Eisen J.A."/>
            <person name="Rutherford K.M."/>
            <person name="Salzberg S.L."/>
            <person name="Craig A."/>
            <person name="Kyes S."/>
            <person name="Chan M.-S."/>
            <person name="Nene V."/>
            <person name="Shallom S.J."/>
            <person name="Suh B."/>
            <person name="Peterson J."/>
            <person name="Angiuoli S."/>
            <person name="Pertea M."/>
            <person name="Allen J."/>
            <person name="Selengut J."/>
            <person name="Haft D."/>
            <person name="Mather M.W."/>
            <person name="Vaidya A.B."/>
            <person name="Martin D.M.A."/>
            <person name="Fairlamb A.H."/>
            <person name="Fraunholz M.J."/>
            <person name="Roos D.S."/>
            <person name="Ralph S.A."/>
            <person name="McFadden G.I."/>
            <person name="Cummings L.M."/>
            <person name="Subramanian G.M."/>
            <person name="Mungall C."/>
            <person name="Venter J.C."/>
            <person name="Carucci D.J."/>
            <person name="Hoffman S.L."/>
            <person name="Newbold C."/>
            <person name="Davis R.W."/>
            <person name="Fraser C.M."/>
            <person name="Barrell B.G."/>
        </authorList>
    </citation>
    <scope>NUCLEOTIDE SEQUENCE [LARGE SCALE GENOMIC DNA]</scope>
    <source>
        <strain evidence="8">3D7</strain>
    </source>
</reference>
<reference evidence="5" key="2">
    <citation type="journal article" date="2011" name="J. Biol. Chem.">
        <title>The molecular basis of folate salvage in Plasmodium falciparum: characterization of two folate transporters.</title>
        <authorList>
            <person name="Salcedo-Sora J.E."/>
            <person name="Ochong E."/>
            <person name="Beveridge S."/>
            <person name="Johnson D."/>
            <person name="Nzila A."/>
            <person name="Biagini G.A."/>
            <person name="Stocks P.A."/>
            <person name="O'Neill P.M."/>
            <person name="Krishna S."/>
            <person name="Bray P.G."/>
            <person name="Ward S.A."/>
        </authorList>
    </citation>
    <scope>FUNCTION</scope>
    <scope>TRANSPORTER ACTIVITY</scope>
    <scope>ACTIVITY REGULATION</scope>
    <scope>SUBCELLULAR LOCATION</scope>
</reference>
<accession>Q8IIK1</accession>
<organism evidence="8">
    <name type="scientific">Plasmodium falciparum (isolate 3D7)</name>
    <dbReference type="NCBI Taxonomy" id="36329"/>
    <lineage>
        <taxon>Eukaryota</taxon>
        <taxon>Sar</taxon>
        <taxon>Alveolata</taxon>
        <taxon>Apicomplexa</taxon>
        <taxon>Aconoidasida</taxon>
        <taxon>Haemosporida</taxon>
        <taxon>Plasmodiidae</taxon>
        <taxon>Plasmodium</taxon>
        <taxon>Plasmodium (Laverania)</taxon>
    </lineage>
</organism>
<sequence length="455" mass="51355">MIEKSNNPFLSIDPIVERTKSNGEGLPLLSEKTKKGFDFTQIVVYLVGLSDGLTHLASLAIYYLFKDYFRLTPYQVSLILMYPYIPFILKPVIALITDSFSIFGMRRKPYLFLFSLFQSLNFLALAFLNLSVIQASLILFFISLCASFCTTVAEALVVESSMGQTYSQGTNKVTEFIASKAIGSLSVAYFSGYFLEKMPREYIFIATSIFPLIISLSCLFLKEKEYSTNRNIFNQLSDLIKFINTPIFLGPFLYIFVYMSGPDYDDAFFFFCTNKLGFRPSFMGTLRLTYGIASLIGIIIYRVFLKNCSLRKTLIITTLVSFPIYISPIILTEHINKFLGISNELFVLSGGFLIEAITEIQLLPLFILTANICQPGLEASVFATILSVKNLGSLTKKGTSSFITYLMKIDSYNFDNLSLYILTCGFFLLFSLTLVPLLPNEEHIEKLKNKETSKG</sequence>
<evidence type="ECO:0000255" key="1"/>
<evidence type="ECO:0000255" key="2">
    <source>
        <dbReference type="PROSITE-ProRule" id="PRU00498"/>
    </source>
</evidence>
<evidence type="ECO:0000269" key="3">
    <source>
    </source>
</evidence>
<evidence type="ECO:0000303" key="4">
    <source>
    </source>
</evidence>
<evidence type="ECO:0000305" key="5"/>
<evidence type="ECO:0000305" key="6">
    <source>
    </source>
</evidence>
<evidence type="ECO:0000312" key="7">
    <source>
        <dbReference type="EMBL" id="CZT98826.1"/>
    </source>
</evidence>
<evidence type="ECO:0000312" key="8">
    <source>
        <dbReference type="Proteomes" id="UP000001450"/>
    </source>
</evidence>
<dbReference type="EMBL" id="LN999945">
    <property type="protein sequence ID" value="CZT98826.1"/>
    <property type="molecule type" value="Genomic_DNA"/>
</dbReference>
<dbReference type="RefSeq" id="XP_001347843.1">
    <property type="nucleotide sequence ID" value="XM_001347807.1"/>
</dbReference>
<dbReference type="FunCoup" id="Q8IIK1">
    <property type="interactions" value="1"/>
</dbReference>
<dbReference type="STRING" id="36329.Q8IIK1"/>
<dbReference type="SwissPalm" id="Q8IIK1"/>
<dbReference type="PaxDb" id="5833-PF11_0172"/>
<dbReference type="EnsemblProtists" id="CZT98826">
    <property type="protein sequence ID" value="CZT98826"/>
    <property type="gene ID" value="PF3D7_1116500"/>
</dbReference>
<dbReference type="GeneID" id="810719"/>
<dbReference type="KEGG" id="pfa:PF3D7_1116500"/>
<dbReference type="VEuPathDB" id="PlasmoDB:PF3D7_1116500"/>
<dbReference type="HOGENOM" id="CLU_018563_3_2_1"/>
<dbReference type="InParanoid" id="Q8IIK1"/>
<dbReference type="OMA" id="SREYIFM"/>
<dbReference type="OrthoDB" id="754047at2759"/>
<dbReference type="PhylomeDB" id="Q8IIK1"/>
<dbReference type="Proteomes" id="UP000001450">
    <property type="component" value="Chromosome 11"/>
</dbReference>
<dbReference type="GO" id="GO:0005886">
    <property type="term" value="C:plasma membrane"/>
    <property type="evidence" value="ECO:0000314"/>
    <property type="project" value="GeneDB"/>
</dbReference>
<dbReference type="GO" id="GO:0008517">
    <property type="term" value="F:folic acid transmembrane transporter activity"/>
    <property type="evidence" value="ECO:0000314"/>
    <property type="project" value="GeneDB"/>
</dbReference>
<dbReference type="CDD" id="cd17484">
    <property type="entry name" value="MFS_FBT"/>
    <property type="match status" value="1"/>
</dbReference>
<dbReference type="FunFam" id="1.20.1250.20:FF:000333">
    <property type="entry name" value="Folate transporter 2"/>
    <property type="match status" value="1"/>
</dbReference>
<dbReference type="Gene3D" id="1.20.1250.20">
    <property type="entry name" value="MFS general substrate transporter like domains"/>
    <property type="match status" value="1"/>
</dbReference>
<dbReference type="InterPro" id="IPR039309">
    <property type="entry name" value="BT1"/>
</dbReference>
<dbReference type="InterPro" id="IPR036259">
    <property type="entry name" value="MFS_trans_sf"/>
</dbReference>
<dbReference type="PANTHER" id="PTHR31585">
    <property type="entry name" value="FOLATE-BIOPTERIN TRANSPORTER 1, CHLOROPLASTIC"/>
    <property type="match status" value="1"/>
</dbReference>
<dbReference type="PANTHER" id="PTHR31585:SF0">
    <property type="entry name" value="FOLATE-BIOPTERIN TRANSPORTER 1, CHLOROPLASTIC"/>
    <property type="match status" value="1"/>
</dbReference>
<dbReference type="Pfam" id="PF03092">
    <property type="entry name" value="BT1"/>
    <property type="match status" value="1"/>
</dbReference>
<dbReference type="SUPFAM" id="SSF103473">
    <property type="entry name" value="MFS general substrate transporter"/>
    <property type="match status" value="1"/>
</dbReference>
<keyword id="KW-1003">Cell membrane</keyword>
<keyword id="KW-0325">Glycoprotein</keyword>
<keyword id="KW-0472">Membrane</keyword>
<keyword id="KW-1185">Reference proteome</keyword>
<keyword id="KW-0812">Transmembrane</keyword>
<keyword id="KW-1133">Transmembrane helix</keyword>
<keyword id="KW-0813">Transport</keyword>
<gene>
    <name evidence="7" type="ORF">PF3D7_1116500</name>
</gene>
<feature type="chain" id="PRO_0000461661" description="Folate transporter 2">
    <location>
        <begin position="1"/>
        <end position="455"/>
    </location>
</feature>
<feature type="transmembrane region" description="Helical" evidence="1">
    <location>
        <begin position="42"/>
        <end position="64"/>
    </location>
</feature>
<feature type="transmembrane region" description="Helical" evidence="1">
    <location>
        <begin position="84"/>
        <end position="103"/>
    </location>
</feature>
<feature type="transmembrane region" description="Helical" evidence="1">
    <location>
        <begin position="110"/>
        <end position="131"/>
    </location>
</feature>
<feature type="transmembrane region" description="Helical" evidence="1">
    <location>
        <begin position="137"/>
        <end position="157"/>
    </location>
</feature>
<feature type="transmembrane region" description="Helical" evidence="1">
    <location>
        <begin position="177"/>
        <end position="195"/>
    </location>
</feature>
<feature type="transmembrane region" description="Helical" evidence="1">
    <location>
        <begin position="201"/>
        <end position="221"/>
    </location>
</feature>
<feature type="transmembrane region" description="Helical" evidence="1">
    <location>
        <begin position="242"/>
        <end position="261"/>
    </location>
</feature>
<feature type="transmembrane region" description="Helical" evidence="1">
    <location>
        <begin position="281"/>
        <end position="301"/>
    </location>
</feature>
<feature type="transmembrane region" description="Helical" evidence="1">
    <location>
        <begin position="313"/>
        <end position="331"/>
    </location>
</feature>
<feature type="transmembrane region" description="Helical" evidence="1">
    <location>
        <begin position="347"/>
        <end position="367"/>
    </location>
</feature>
<feature type="transmembrane region" description="Helical" evidence="1">
    <location>
        <begin position="417"/>
        <end position="438"/>
    </location>
</feature>
<feature type="glycosylation site" description="N-linked (GlcNAc...) asparagine" evidence="2">
    <location>
        <position position="307"/>
    </location>
</feature>
<feature type="glycosylation site" description="N-linked (GlcNAc...) asparagine" evidence="2">
    <location>
        <position position="416"/>
    </location>
</feature>
<name>FT2_PLAF7</name>